<name>TXR7_MACRV</name>
<dbReference type="SMR" id="P0DL75"/>
<dbReference type="GO" id="GO:0005576">
    <property type="term" value="C:extracellular region"/>
    <property type="evidence" value="ECO:0007669"/>
    <property type="project" value="UniProtKB-SubCell"/>
</dbReference>
<dbReference type="GO" id="GO:0017080">
    <property type="term" value="F:sodium channel regulator activity"/>
    <property type="evidence" value="ECO:0007669"/>
    <property type="project" value="UniProtKB-KW"/>
</dbReference>
<dbReference type="GO" id="GO:0090729">
    <property type="term" value="F:toxin activity"/>
    <property type="evidence" value="ECO:0007669"/>
    <property type="project" value="UniProtKB-KW"/>
</dbReference>
<protein>
    <recommendedName>
        <fullName evidence="3">RTX-VII</fullName>
    </recommendedName>
    <alternativeName>
        <fullName evidence="3">Alpha-hexatoxin-MrVII</fullName>
    </alternativeName>
</protein>
<keyword id="KW-0027">Amidation</keyword>
<keyword id="KW-0903">Direct protein sequencing</keyword>
<keyword id="KW-1015">Disulfide bond</keyword>
<keyword id="KW-0872">Ion channel impairing toxin</keyword>
<keyword id="KW-0960">Knottin</keyword>
<keyword id="KW-0528">Neurotoxin</keyword>
<keyword id="KW-0964">Secreted</keyword>
<keyword id="KW-0732">Signal</keyword>
<keyword id="KW-0800">Toxin</keyword>
<keyword id="KW-0738">Voltage-gated sodium channel impairing toxin</keyword>
<comment type="function">
    <text evidence="2">Agonist of rat Nav1.3/SCN3A. This toxin increases the peak current amplitude, and potently inhibits the fast inactivation of the channel (EC(50)=120 nM). The inhibition of fast inactivation is voltage-independent (depolarizing voltages ranging from 220 mV to 130 mV). The toxin might bind to the domain IV of the Nav1.3 channel, while domain II might not participate in interacting with the toxin but could determine the efficacy of RTX-VII. In vivo, when intracerebroventricularly injected into mice, the toxin causes involuntary body twitching (seizure-like symptoms).</text>
</comment>
<comment type="subcellular location">
    <subcellularLocation>
        <location evidence="2">Secreted</location>
    </subcellularLocation>
</comment>
<comment type="tissue specificity">
    <text evidence="4">Expressed by the venom gland.</text>
</comment>
<comment type="domain">
    <text evidence="4">The presence of a 'disulfide through disulfide knot' structurally defines this protein as a knottin.</text>
</comment>
<comment type="mass spectrometry"/>
<comment type="similarity">
    <text>Belongs to the rTX family.</text>
</comment>
<organism>
    <name type="scientific">Macrothele raveni</name>
    <name type="common">Funnel-web spider</name>
    <dbReference type="NCBI Taxonomy" id="269627"/>
    <lineage>
        <taxon>Eukaryota</taxon>
        <taxon>Metazoa</taxon>
        <taxon>Ecdysozoa</taxon>
        <taxon>Arthropoda</taxon>
        <taxon>Chelicerata</taxon>
        <taxon>Arachnida</taxon>
        <taxon>Araneae</taxon>
        <taxon>Mygalomorphae</taxon>
        <taxon>Macrothelidae</taxon>
        <taxon>Macrothele</taxon>
    </lineage>
</organism>
<sequence>MKTIVYLIVSILLLSSTVLVLAEGNAASHELQEYPIEEQRKCVDGSCDPYSSDAPPCCDNQICQCIFFVPCYCKYRGK</sequence>
<feature type="signal peptide" evidence="1">
    <location>
        <begin position="1"/>
        <end position="22"/>
    </location>
</feature>
<feature type="propeptide" id="PRO_0000441927" evidence="2">
    <location>
        <begin position="23"/>
        <end position="40"/>
    </location>
</feature>
<feature type="chain" id="PRO_0000441928" description="RTX-VII" evidence="2">
    <location>
        <begin position="41"/>
        <end position="76"/>
    </location>
</feature>
<feature type="modified residue" description="Arginine amide" evidence="4">
    <location>
        <position position="76"/>
    </location>
</feature>
<feature type="disulfide bond" evidence="4">
    <location>
        <begin position="42"/>
        <end position="58"/>
    </location>
</feature>
<feature type="disulfide bond" evidence="4">
    <location>
        <begin position="47"/>
        <end position="63"/>
    </location>
</feature>
<feature type="disulfide bond" evidence="4">
    <location>
        <begin position="57"/>
        <end position="73"/>
    </location>
</feature>
<feature type="disulfide bond" evidence="4">
    <location>
        <begin position="65"/>
        <end position="71"/>
    </location>
</feature>
<reference key="1">
    <citation type="journal article" date="2015" name="Sci. Rep.">
        <title>Synergetic action of domain II and IV underlies persistent current generation in Nav1.3 as revealed by a tarantula toxin.</title>
        <authorList>
            <person name="Tang C."/>
            <person name="Zhou X."/>
            <person name="Zhang Y."/>
            <person name="Xiao Z."/>
            <person name="Hu Z."/>
            <person name="Zhang C."/>
            <person name="Huang Y."/>
            <person name="Chen B."/>
            <person name="Liu Z."/>
            <person name="Liang S."/>
        </authorList>
    </citation>
    <scope>NUCLEOTIDE SEQUENCE [MRNA]</scope>
    <scope>PARTIAL PROTEIN SEQUENCE</scope>
    <scope>MASS SPECTROMETRY</scope>
    <scope>AMIDATION AT ARG-76</scope>
    <scope>SUBCELLULAR LOCATION</scope>
    <scope>FUNCTION</scope>
    <scope>BIOASSAY</scope>
    <source>
        <tissue>Venom</tissue>
        <tissue>Venom gland</tissue>
    </source>
</reference>
<proteinExistence type="evidence at protein level"/>
<evidence type="ECO:0000255" key="1"/>
<evidence type="ECO:0000269" key="2">
    <source>
    </source>
</evidence>
<evidence type="ECO:0000303" key="3">
    <source>
    </source>
</evidence>
<evidence type="ECO:0000305" key="4">
    <source>
    </source>
</evidence>
<accession>P0DL75</accession>